<name>HEPS1_GEOSE</name>
<feature type="chain" id="PRO_0000124001" description="Heptaprenyl diphosphate synthase component 1">
    <location>
        <begin position="1"/>
        <end position="220"/>
    </location>
</feature>
<keyword id="KW-0414">Isoprene biosynthesis</keyword>
<keyword id="KW-0808">Transferase</keyword>
<accession>P55784</accession>
<accession>P94455</accession>
<sequence length="220" mass="24636">MLDGASTAPSEAERCIIAMMLMQIALDTHDEVTDDGGDLRARQLVVLAGDLYSGLYYELLARSGETALIRSFAEAVRDINEQKVRLYEKKVERIESLFAAVGTIESALLVKLADRMAAPQWGQFAYSYLLMRRLLLEQEAFIRTGASVLFEQMAQIAFPRAKTLTKEQKRHLLRFCRRYIDGCREALFAAKLPVNGLLQLRVAELSGGFQAIAKKTVEEG</sequence>
<organism>
    <name type="scientific">Geobacillus stearothermophilus</name>
    <name type="common">Bacillus stearothermophilus</name>
    <dbReference type="NCBI Taxonomy" id="1422"/>
    <lineage>
        <taxon>Bacteria</taxon>
        <taxon>Bacillati</taxon>
        <taxon>Bacillota</taxon>
        <taxon>Bacilli</taxon>
        <taxon>Bacillales</taxon>
        <taxon>Anoxybacillaceae</taxon>
        <taxon>Geobacillus</taxon>
    </lineage>
</organism>
<dbReference type="EC" id="2.5.1.30"/>
<dbReference type="EMBL" id="D49975">
    <property type="protein sequence ID" value="BAA08724.1"/>
    <property type="molecule type" value="Genomic_DNA"/>
</dbReference>
<dbReference type="SMR" id="P55784"/>
<dbReference type="BRENDA" id="2.5.1.30">
    <property type="organism ID" value="623"/>
</dbReference>
<dbReference type="GO" id="GO:0000010">
    <property type="term" value="F:heptaprenyl diphosphate synthase activity"/>
    <property type="evidence" value="ECO:0007669"/>
    <property type="project" value="UniProtKB-EC"/>
</dbReference>
<dbReference type="GO" id="GO:0016765">
    <property type="term" value="F:transferase activity, transferring alkyl or aryl (other than methyl) groups"/>
    <property type="evidence" value="ECO:0000314"/>
    <property type="project" value="UniProtKB"/>
</dbReference>
<dbReference type="GO" id="GO:0008299">
    <property type="term" value="P:isoprenoid biosynthetic process"/>
    <property type="evidence" value="ECO:0007669"/>
    <property type="project" value="UniProtKB-KW"/>
</dbReference>
<dbReference type="GO" id="GO:0009234">
    <property type="term" value="P:menaquinone biosynthetic process"/>
    <property type="evidence" value="ECO:0000250"/>
    <property type="project" value="UniProtKB"/>
</dbReference>
<dbReference type="Gene3D" id="1.20.120.1450">
    <property type="match status" value="1"/>
</dbReference>
<dbReference type="InterPro" id="IPR009920">
    <property type="entry name" value="HEPPP_synth_su1"/>
</dbReference>
<dbReference type="Pfam" id="PF07307">
    <property type="entry name" value="HEPPP_synt_1"/>
    <property type="match status" value="1"/>
</dbReference>
<proteinExistence type="predicted"/>
<gene>
    <name type="primary">hepS</name>
    <name type="synonym">hepS-1</name>
</gene>
<protein>
    <recommendedName>
        <fullName>Heptaprenyl diphosphate synthase component 1</fullName>
        <shortName>HepPP synthase subunit 1</shortName>
        <ecNumber>2.5.1.30</ecNumber>
    </recommendedName>
</protein>
<comment type="function">
    <text>Supplies heptaprenyl diphosphate, the precursor for the side chain of the isoprenoid quinone menaquinone-7 (MQ-7).</text>
</comment>
<comment type="catalytic activity">
    <reaction>
        <text>4 isopentenyl diphosphate + (2E,6E)-farnesyl diphosphate = all-trans-heptaprenyl diphosphate + 4 diphosphate</text>
        <dbReference type="Rhea" id="RHEA:27794"/>
        <dbReference type="ChEBI" id="CHEBI:33019"/>
        <dbReference type="ChEBI" id="CHEBI:58206"/>
        <dbReference type="ChEBI" id="CHEBI:128769"/>
        <dbReference type="ChEBI" id="CHEBI:175763"/>
        <dbReference type="EC" id="2.5.1.30"/>
    </reaction>
</comment>
<comment type="subunit">
    <text>Heterodimer of component I and II.</text>
</comment>
<reference key="1">
    <citation type="journal article" date="1995" name="J. Biol. Chem.">
        <title>Molecular cloning and nucleotide sequences of the genes for two essential proteins constituting a novel enzyme system for heptaprenyl diphosphate synthesis.</title>
        <authorList>
            <person name="Koike-Takeshita A."/>
            <person name="Koyama T."/>
            <person name="Obata S."/>
            <person name="Ogura K."/>
        </authorList>
    </citation>
    <scope>NUCLEOTIDE SEQUENCE [GENOMIC DNA]</scope>
    <source>
        <strain>ATCC 10149 / DSM 6790 / CCM 5965 / CIP 105453 / JCM 11297 / NRS T15</strain>
    </source>
</reference>